<protein>
    <recommendedName>
        <fullName>U3-theraphotoxin-Hhn1a 3</fullName>
        <shortName>U3-TRTX-Hhn1a</shortName>
    </recommendedName>
    <alternativeName>
        <fullName>Hainantoxin-VIII.3</fullName>
        <shortName>HNTX-VIII.3</shortName>
    </alternativeName>
    <alternativeName>
        <fullName>Peptide F4-27.90</fullName>
    </alternativeName>
</protein>
<evidence type="ECO:0000250" key="1"/>
<evidence type="ECO:0000250" key="2">
    <source>
        <dbReference type="UniProtKB" id="B3FIS6"/>
    </source>
</evidence>
<evidence type="ECO:0000255" key="3"/>
<evidence type="ECO:0000269" key="4">
    <source>
    </source>
</evidence>
<evidence type="ECO:0000305" key="5"/>
<feature type="signal peptide" evidence="3">
    <location>
        <begin position="1"/>
        <end position="24"/>
    </location>
</feature>
<feature type="propeptide" id="PRO_0000400583" evidence="4">
    <location>
        <begin position="25"/>
        <end position="52"/>
    </location>
</feature>
<feature type="peptide" id="PRO_0000400584" description="U3-theraphotoxin-Hhn1a 3">
    <location>
        <begin position="53"/>
        <end position="87"/>
    </location>
</feature>
<feature type="disulfide bond" evidence="2">
    <location>
        <begin position="54"/>
        <end position="67"/>
    </location>
</feature>
<feature type="disulfide bond" evidence="2">
    <location>
        <begin position="61"/>
        <end position="72"/>
    </location>
</feature>
<feature type="disulfide bond" evidence="2">
    <location>
        <begin position="66"/>
        <end position="79"/>
    </location>
</feature>
<proteinExistence type="evidence at protein level"/>
<reference key="1">
    <citation type="journal article" date="2010" name="J. Proteome Res.">
        <title>Molecular diversification of peptide toxins from the tarantula Haplopelma hainanum (Ornithoctonus hainana) venom based on transcriptomic, peptidomic, and genomic analyses.</title>
        <authorList>
            <person name="Tang X."/>
            <person name="Zhang Y."/>
            <person name="Hu W."/>
            <person name="Xu D."/>
            <person name="Tao H."/>
            <person name="Yang X."/>
            <person name="Li Y."/>
            <person name="Jiang L."/>
            <person name="Liang S."/>
        </authorList>
    </citation>
    <scope>NUCLEOTIDE SEQUENCE [LARGE SCALE MRNA]</scope>
    <scope>PROTEIN SEQUENCE OF 53-85</scope>
    <scope>IDENTIFICATION BY MASS SPECTROMETRY</scope>
    <source>
        <tissue>Venom</tissue>
        <tissue>Venom gland</tissue>
    </source>
</reference>
<keyword id="KW-0903">Direct protein sequencing</keyword>
<keyword id="KW-1015">Disulfide bond</keyword>
<keyword id="KW-0872">Ion channel impairing toxin</keyword>
<keyword id="KW-0960">Knottin</keyword>
<keyword id="KW-0964">Secreted</keyword>
<keyword id="KW-0732">Signal</keyword>
<keyword id="KW-0800">Toxin</keyword>
<sequence length="87" mass="10165">MVNMKASMFLTFAGLVLLFVVCYAPESEEKEFPKEMLSSIFAVDNDFKQEERDCAGYMRECKEKLCCSGYVCSSRWKWCVLPAPWRR</sequence>
<accession>D2Y242</accession>
<name>H8A03_CYRHA</name>
<dbReference type="EMBL" id="GU292919">
    <property type="protein sequence ID" value="ADB56735.1"/>
    <property type="molecule type" value="mRNA"/>
</dbReference>
<dbReference type="SMR" id="D2Y242"/>
<dbReference type="ArachnoServer" id="AS001657">
    <property type="toxin name" value="U3-theraphotoxin-Hhn1a"/>
</dbReference>
<dbReference type="GO" id="GO:0005576">
    <property type="term" value="C:extracellular region"/>
    <property type="evidence" value="ECO:0007669"/>
    <property type="project" value="UniProtKB-SubCell"/>
</dbReference>
<dbReference type="GO" id="GO:0008200">
    <property type="term" value="F:ion channel inhibitor activity"/>
    <property type="evidence" value="ECO:0007669"/>
    <property type="project" value="InterPro"/>
</dbReference>
<dbReference type="GO" id="GO:0090729">
    <property type="term" value="F:toxin activity"/>
    <property type="evidence" value="ECO:0007669"/>
    <property type="project" value="UniProtKB-KW"/>
</dbReference>
<dbReference type="InterPro" id="IPR011696">
    <property type="entry name" value="Huwentoxin-1"/>
</dbReference>
<dbReference type="InterPro" id="IPR013140">
    <property type="entry name" value="Huwentoxin_CS1"/>
</dbReference>
<dbReference type="Pfam" id="PF07740">
    <property type="entry name" value="Toxin_12"/>
    <property type="match status" value="1"/>
</dbReference>
<dbReference type="SUPFAM" id="SSF57059">
    <property type="entry name" value="omega toxin-like"/>
    <property type="match status" value="1"/>
</dbReference>
<dbReference type="PROSITE" id="PS60021">
    <property type="entry name" value="HWTX_1"/>
    <property type="match status" value="1"/>
</dbReference>
<organism>
    <name type="scientific">Cyriopagopus hainanus</name>
    <name type="common">Chinese bird spider</name>
    <name type="synonym">Haplopelma hainanum</name>
    <dbReference type="NCBI Taxonomy" id="209901"/>
    <lineage>
        <taxon>Eukaryota</taxon>
        <taxon>Metazoa</taxon>
        <taxon>Ecdysozoa</taxon>
        <taxon>Arthropoda</taxon>
        <taxon>Chelicerata</taxon>
        <taxon>Arachnida</taxon>
        <taxon>Araneae</taxon>
        <taxon>Mygalomorphae</taxon>
        <taxon>Theraphosidae</taxon>
        <taxon>Haplopelma</taxon>
    </lineage>
</organism>
<comment type="function">
    <text evidence="1">Ion channel inhibitor.</text>
</comment>
<comment type="subcellular location">
    <subcellularLocation>
        <location>Secreted</location>
    </subcellularLocation>
</comment>
<comment type="tissue specificity">
    <text>Expressed by the venom gland.</text>
</comment>
<comment type="domain">
    <text evidence="1">The presence of a 'disulfide through disulfide knot' structurally defines this protein as a knottin.</text>
</comment>
<comment type="similarity">
    <text evidence="5">Belongs to the neurotoxin 10 (Hwtx-1) family. 51 (Hntx-8) subfamily. Hntx-8 sub-subfamily.</text>
</comment>